<comment type="function">
    <text evidence="1">Part of a membrane-bound complex that couples electron transfer with translocation of ions across the membrane.</text>
</comment>
<comment type="cofactor">
    <cofactor evidence="1">
        <name>FMN</name>
        <dbReference type="ChEBI" id="CHEBI:58210"/>
    </cofactor>
</comment>
<comment type="subunit">
    <text evidence="1">The complex is composed of six subunits: RnfA, RnfB, RnfC, RnfD, RnfE and RnfG.</text>
</comment>
<comment type="subcellular location">
    <subcellularLocation>
        <location evidence="1">Cell inner membrane</location>
        <topology evidence="1">Multi-pass membrane protein</topology>
    </subcellularLocation>
</comment>
<comment type="similarity">
    <text evidence="1">Belongs to the NqrB/RnfD family.</text>
</comment>
<keyword id="KW-0997">Cell inner membrane</keyword>
<keyword id="KW-1003">Cell membrane</keyword>
<keyword id="KW-0249">Electron transport</keyword>
<keyword id="KW-0285">Flavoprotein</keyword>
<keyword id="KW-0288">FMN</keyword>
<keyword id="KW-0472">Membrane</keyword>
<keyword id="KW-0597">Phosphoprotein</keyword>
<keyword id="KW-1185">Reference proteome</keyword>
<keyword id="KW-1278">Translocase</keyword>
<keyword id="KW-0812">Transmembrane</keyword>
<keyword id="KW-1133">Transmembrane helix</keyword>
<keyword id="KW-0813">Transport</keyword>
<dbReference type="EC" id="7.-.-.-" evidence="1"/>
<dbReference type="EMBL" id="CP000507">
    <property type="protein sequence ID" value="ABM00039.1"/>
    <property type="molecule type" value="Genomic_DNA"/>
</dbReference>
<dbReference type="RefSeq" id="WP_011759946.1">
    <property type="nucleotide sequence ID" value="NC_008700.1"/>
</dbReference>
<dbReference type="SMR" id="A1S6N2"/>
<dbReference type="STRING" id="326297.Sama_1833"/>
<dbReference type="KEGG" id="saz:Sama_1833"/>
<dbReference type="eggNOG" id="COG4658">
    <property type="taxonomic scope" value="Bacteria"/>
</dbReference>
<dbReference type="HOGENOM" id="CLU_042020_0_0_6"/>
<dbReference type="OrthoDB" id="9776359at2"/>
<dbReference type="Proteomes" id="UP000009175">
    <property type="component" value="Chromosome"/>
</dbReference>
<dbReference type="GO" id="GO:0005886">
    <property type="term" value="C:plasma membrane"/>
    <property type="evidence" value="ECO:0007669"/>
    <property type="project" value="UniProtKB-SubCell"/>
</dbReference>
<dbReference type="GO" id="GO:0022900">
    <property type="term" value="P:electron transport chain"/>
    <property type="evidence" value="ECO:0007669"/>
    <property type="project" value="UniProtKB-UniRule"/>
</dbReference>
<dbReference type="GO" id="GO:0055085">
    <property type="term" value="P:transmembrane transport"/>
    <property type="evidence" value="ECO:0007669"/>
    <property type="project" value="InterPro"/>
</dbReference>
<dbReference type="HAMAP" id="MF_00462">
    <property type="entry name" value="RsxD_RnfD"/>
    <property type="match status" value="1"/>
</dbReference>
<dbReference type="InterPro" id="IPR004338">
    <property type="entry name" value="NqrB/RnfD"/>
</dbReference>
<dbReference type="InterPro" id="IPR011303">
    <property type="entry name" value="RnfD_bac"/>
</dbReference>
<dbReference type="NCBIfam" id="NF002011">
    <property type="entry name" value="PRK00816.1"/>
    <property type="match status" value="1"/>
</dbReference>
<dbReference type="NCBIfam" id="TIGR01946">
    <property type="entry name" value="rnfD"/>
    <property type="match status" value="1"/>
</dbReference>
<dbReference type="PANTHER" id="PTHR30578">
    <property type="entry name" value="ELECTRON TRANSPORT COMPLEX PROTEIN RNFD"/>
    <property type="match status" value="1"/>
</dbReference>
<dbReference type="PANTHER" id="PTHR30578:SF0">
    <property type="entry name" value="ION-TRANSLOCATING OXIDOREDUCTASE COMPLEX SUBUNIT D"/>
    <property type="match status" value="1"/>
</dbReference>
<dbReference type="Pfam" id="PF03116">
    <property type="entry name" value="NQR2_RnfD_RnfE"/>
    <property type="match status" value="1"/>
</dbReference>
<feature type="chain" id="PRO_1000081154" description="Ion-translocating oxidoreductase complex subunit D">
    <location>
        <begin position="1"/>
        <end position="348"/>
    </location>
</feature>
<feature type="transmembrane region" description="Helical" evidence="1">
    <location>
        <begin position="25"/>
        <end position="45"/>
    </location>
</feature>
<feature type="transmembrane region" description="Helical" evidence="1">
    <location>
        <begin position="68"/>
        <end position="88"/>
    </location>
</feature>
<feature type="transmembrane region" description="Helical" evidence="1">
    <location>
        <begin position="124"/>
        <end position="144"/>
    </location>
</feature>
<feature type="transmembrane region" description="Helical" evidence="1">
    <location>
        <begin position="211"/>
        <end position="231"/>
    </location>
</feature>
<feature type="transmembrane region" description="Helical" evidence="1">
    <location>
        <begin position="237"/>
        <end position="257"/>
    </location>
</feature>
<feature type="transmembrane region" description="Helical" evidence="1">
    <location>
        <begin position="263"/>
        <end position="283"/>
    </location>
</feature>
<feature type="transmembrane region" description="Helical" evidence="1">
    <location>
        <begin position="296"/>
        <end position="316"/>
    </location>
</feature>
<feature type="transmembrane region" description="Helical" evidence="1">
    <location>
        <begin position="317"/>
        <end position="337"/>
    </location>
</feature>
<feature type="modified residue" description="FMN phosphoryl threonine" evidence="1">
    <location>
        <position position="182"/>
    </location>
</feature>
<evidence type="ECO:0000255" key="1">
    <source>
        <dbReference type="HAMAP-Rule" id="MF_00462"/>
    </source>
</evidence>
<organism>
    <name type="scientific">Shewanella amazonensis (strain ATCC BAA-1098 / SB2B)</name>
    <dbReference type="NCBI Taxonomy" id="326297"/>
    <lineage>
        <taxon>Bacteria</taxon>
        <taxon>Pseudomonadati</taxon>
        <taxon>Pseudomonadota</taxon>
        <taxon>Gammaproteobacteria</taxon>
        <taxon>Alteromonadales</taxon>
        <taxon>Shewanellaceae</taxon>
        <taxon>Shewanella</taxon>
    </lineage>
</organism>
<proteinExistence type="inferred from homology"/>
<accession>A1S6N2</accession>
<name>RNFD_SHEAM</name>
<gene>
    <name evidence="1" type="primary">rnfD</name>
    <name type="ordered locus">Sama_1833</name>
</gene>
<reference key="1">
    <citation type="submission" date="2006-12" db="EMBL/GenBank/DDBJ databases">
        <title>Complete sequence of Shewanella amazonensis SB2B.</title>
        <authorList>
            <consortium name="US DOE Joint Genome Institute"/>
            <person name="Copeland A."/>
            <person name="Lucas S."/>
            <person name="Lapidus A."/>
            <person name="Barry K."/>
            <person name="Detter J.C."/>
            <person name="Glavina del Rio T."/>
            <person name="Hammon N."/>
            <person name="Israni S."/>
            <person name="Dalin E."/>
            <person name="Tice H."/>
            <person name="Pitluck S."/>
            <person name="Munk A.C."/>
            <person name="Brettin T."/>
            <person name="Bruce D."/>
            <person name="Han C."/>
            <person name="Tapia R."/>
            <person name="Gilna P."/>
            <person name="Schmutz J."/>
            <person name="Larimer F."/>
            <person name="Land M."/>
            <person name="Hauser L."/>
            <person name="Kyrpides N."/>
            <person name="Mikhailova N."/>
            <person name="Fredrickson J."/>
            <person name="Richardson P."/>
        </authorList>
    </citation>
    <scope>NUCLEOTIDE SEQUENCE [LARGE SCALE GENOMIC DNA]</scope>
    <source>
        <strain>ATCC BAA-1098 / SB2B</strain>
    </source>
</reference>
<protein>
    <recommendedName>
        <fullName evidence="1">Ion-translocating oxidoreductase complex subunit D</fullName>
        <ecNumber evidence="1">7.-.-.-</ecNumber>
    </recommendedName>
    <alternativeName>
        <fullName evidence="1">Rnf electron transport complex subunit D</fullName>
    </alternativeName>
</protein>
<sequence length="348" mass="36669">MAFKIASSPHVRKDSQTSAVMQRVILAALPGLAVQCYFFGWGTFIQVCVAIATALAAEALVLKLRNRPISPTLMDQSAVLTALLIGVAIPPLAPWYLVVIGTVFAIVMVKQLYGGLGQNLFNPAMAAYVLLLVSFPVLMTTWAAPSTLAQSSAGILDAIDVIFSAQGAADFALGIDGVSMATPLDTLKTDLSMGLTADESLKRAIFGGGSTGEGWFWVNLAYLCGGLFLLATKTIRWHISGGLIGALFVCSLFGFGASPDTHASPLFNLFSGATMLAAFFIATDPVTAATSPRGRLLFGAMIGVLIYLIRTFGGYPDGVAFAVLLANLCAPLIDYYIKPRAYGHRGSL</sequence>